<protein>
    <recommendedName>
        <fullName>SVP1-like protein 2</fullName>
    </recommendedName>
</protein>
<gene>
    <name type="primary">hsv2</name>
    <name type="synonym">atg18c</name>
    <name type="ORF">SPAC458.06</name>
</gene>
<sequence>MSTINTVSLNQDASCMSVALDTGYKIFQINPLKLRAQRQFNDGGLSIVKMLFRSNVLLLVGGGGNPKYAPNKLIVWDDVKERPVKELELNFEIKGICFDGKLLAIATASKLFLYQFGNNLKLQRCLDTQNPKGLCAMVTTVEKTAIVFPSRKVGQLQILFLFKDHMNTSIVPAHDSEISCLGISKTGSKIASSSTNGTLIRIWNSETGEKICEFRRGYQHTAVCQLAFSPDELLLACASKKETLHIFSLHGSPNTIRQLTSEEPYEEASEFKSSTTEPRQTHWKRKLLKLIDSGKRAHWRIQLYQSNPVLLHWLDEMTILICYKDAAYQKLKLTIEESSKSVEHANQHVCFHYDYTLEADGSLC</sequence>
<keyword id="KW-0968">Cytoplasmic vesicle</keyword>
<keyword id="KW-0472">Membrane</keyword>
<keyword id="KW-0653">Protein transport</keyword>
<keyword id="KW-1185">Reference proteome</keyword>
<keyword id="KW-0677">Repeat</keyword>
<keyword id="KW-0813">Transport</keyword>
<keyword id="KW-0926">Vacuole</keyword>
<keyword id="KW-0853">WD repeat</keyword>
<reference key="1">
    <citation type="journal article" date="2002" name="Nature">
        <title>The genome sequence of Schizosaccharomyces pombe.</title>
        <authorList>
            <person name="Wood V."/>
            <person name="Gwilliam R."/>
            <person name="Rajandream M.A."/>
            <person name="Lyne M.H."/>
            <person name="Lyne R."/>
            <person name="Stewart A."/>
            <person name="Sgouros J.G."/>
            <person name="Peat N."/>
            <person name="Hayles J."/>
            <person name="Baker S.G."/>
            <person name="Basham D."/>
            <person name="Bowman S."/>
            <person name="Brooks K."/>
            <person name="Brown D."/>
            <person name="Brown S."/>
            <person name="Chillingworth T."/>
            <person name="Churcher C.M."/>
            <person name="Collins M."/>
            <person name="Connor R."/>
            <person name="Cronin A."/>
            <person name="Davis P."/>
            <person name="Feltwell T."/>
            <person name="Fraser A."/>
            <person name="Gentles S."/>
            <person name="Goble A."/>
            <person name="Hamlin N."/>
            <person name="Harris D.E."/>
            <person name="Hidalgo J."/>
            <person name="Hodgson G."/>
            <person name="Holroyd S."/>
            <person name="Hornsby T."/>
            <person name="Howarth S."/>
            <person name="Huckle E.J."/>
            <person name="Hunt S."/>
            <person name="Jagels K."/>
            <person name="James K.D."/>
            <person name="Jones L."/>
            <person name="Jones M."/>
            <person name="Leather S."/>
            <person name="McDonald S."/>
            <person name="McLean J."/>
            <person name="Mooney P."/>
            <person name="Moule S."/>
            <person name="Mungall K.L."/>
            <person name="Murphy L.D."/>
            <person name="Niblett D."/>
            <person name="Odell C."/>
            <person name="Oliver K."/>
            <person name="O'Neil S."/>
            <person name="Pearson D."/>
            <person name="Quail M.A."/>
            <person name="Rabbinowitsch E."/>
            <person name="Rutherford K.M."/>
            <person name="Rutter S."/>
            <person name="Saunders D."/>
            <person name="Seeger K."/>
            <person name="Sharp S."/>
            <person name="Skelton J."/>
            <person name="Simmonds M.N."/>
            <person name="Squares R."/>
            <person name="Squares S."/>
            <person name="Stevens K."/>
            <person name="Taylor K."/>
            <person name="Taylor R.G."/>
            <person name="Tivey A."/>
            <person name="Walsh S.V."/>
            <person name="Warren T."/>
            <person name="Whitehead S."/>
            <person name="Woodward J.R."/>
            <person name="Volckaert G."/>
            <person name="Aert R."/>
            <person name="Robben J."/>
            <person name="Grymonprez B."/>
            <person name="Weltjens I."/>
            <person name="Vanstreels E."/>
            <person name="Rieger M."/>
            <person name="Schaefer M."/>
            <person name="Mueller-Auer S."/>
            <person name="Gabel C."/>
            <person name="Fuchs M."/>
            <person name="Duesterhoeft A."/>
            <person name="Fritzc C."/>
            <person name="Holzer E."/>
            <person name="Moestl D."/>
            <person name="Hilbert H."/>
            <person name="Borzym K."/>
            <person name="Langer I."/>
            <person name="Beck A."/>
            <person name="Lehrach H."/>
            <person name="Reinhardt R."/>
            <person name="Pohl T.M."/>
            <person name="Eger P."/>
            <person name="Zimmermann W."/>
            <person name="Wedler H."/>
            <person name="Wambutt R."/>
            <person name="Purnelle B."/>
            <person name="Goffeau A."/>
            <person name="Cadieu E."/>
            <person name="Dreano S."/>
            <person name="Gloux S."/>
            <person name="Lelaure V."/>
            <person name="Mottier S."/>
            <person name="Galibert F."/>
            <person name="Aves S.J."/>
            <person name="Xiang Z."/>
            <person name="Hunt C."/>
            <person name="Moore K."/>
            <person name="Hurst S.M."/>
            <person name="Lucas M."/>
            <person name="Rochet M."/>
            <person name="Gaillardin C."/>
            <person name="Tallada V.A."/>
            <person name="Garzon A."/>
            <person name="Thode G."/>
            <person name="Daga R.R."/>
            <person name="Cruzado L."/>
            <person name="Jimenez J."/>
            <person name="Sanchez M."/>
            <person name="del Rey F."/>
            <person name="Benito J."/>
            <person name="Dominguez A."/>
            <person name="Revuelta J.L."/>
            <person name="Moreno S."/>
            <person name="Armstrong J."/>
            <person name="Forsburg S.L."/>
            <person name="Cerutti L."/>
            <person name="Lowe T."/>
            <person name="McCombie W.R."/>
            <person name="Paulsen I."/>
            <person name="Potashkin J."/>
            <person name="Shpakovski G.V."/>
            <person name="Ussery D."/>
            <person name="Barrell B.G."/>
            <person name="Nurse P."/>
        </authorList>
    </citation>
    <scope>NUCLEOTIDE SEQUENCE [LARGE SCALE GENOMIC DNA]</scope>
    <source>
        <strain>972 / ATCC 24843</strain>
    </source>
</reference>
<reference key="2">
    <citation type="journal article" date="2013" name="PLoS Genet.">
        <title>Global analysis of fission yeast mating genes reveals new autophagy factors.</title>
        <authorList>
            <person name="Sun L.L."/>
            <person name="Li M."/>
            <person name="Suo F."/>
            <person name="Liu X.M."/>
            <person name="Shen E.Z."/>
            <person name="Yang B."/>
            <person name="Dong M.Q."/>
            <person name="He W.Z."/>
            <person name="Du L.L."/>
        </authorList>
    </citation>
    <scope>DISRUPTION PHENOTYPE</scope>
    <scope>SUBCELLULAR LOCATION</scope>
</reference>
<evidence type="ECO:0000250" key="1"/>
<evidence type="ECO:0000269" key="2">
    <source>
    </source>
</evidence>
<evidence type="ECO:0000305" key="3"/>
<organism>
    <name type="scientific">Schizosaccharomyces pombe (strain 972 / ATCC 24843)</name>
    <name type="common">Fission yeast</name>
    <dbReference type="NCBI Taxonomy" id="284812"/>
    <lineage>
        <taxon>Eukaryota</taxon>
        <taxon>Fungi</taxon>
        <taxon>Dikarya</taxon>
        <taxon>Ascomycota</taxon>
        <taxon>Taphrinomycotina</taxon>
        <taxon>Schizosaccharomycetes</taxon>
        <taxon>Schizosaccharomycetales</taxon>
        <taxon>Schizosaccharomycetaceae</taxon>
        <taxon>Schizosaccharomyces</taxon>
    </lineage>
</organism>
<proteinExistence type="inferred from homology"/>
<comment type="function">
    <text evidence="1">Involved in mitochondrial or peroxisomal functions and amino acid signaling pathways.</text>
</comment>
<comment type="subcellular location">
    <subcellularLocation>
        <location evidence="1">Vacuole membrane</location>
        <topology evidence="1">Peripheral membrane protein</topology>
    </subcellularLocation>
    <subcellularLocation>
        <location evidence="1">Cytoplasmic vesicle membrane</location>
        <topology evidence="1">Peripheral membrane protein</topology>
    </subcellularLocation>
    <subcellularLocation>
        <location evidence="2">Preautophagosomal structure membrane</location>
        <topology evidence="2">Peripheral membrane protein</topology>
    </subcellularLocation>
</comment>
<comment type="domain">
    <text evidence="1">May contain a beta-propeller domain involved in specific binding to phosphatidylinositol 3,5-bisphosphate (PIP2), leading to the association of the protein to the membrane.</text>
</comment>
<comment type="disruption phenotype">
    <text evidence="2">Impairs atg8-processing.</text>
</comment>
<comment type="similarity">
    <text evidence="3">Belongs to the WD repeat PROPPIN family.</text>
</comment>
<dbReference type="EMBL" id="CU329670">
    <property type="protein sequence ID" value="CAB93848.1"/>
    <property type="molecule type" value="Genomic_DNA"/>
</dbReference>
<dbReference type="RefSeq" id="NP_594700.1">
    <property type="nucleotide sequence ID" value="NM_001020128.2"/>
</dbReference>
<dbReference type="SMR" id="Q9P3W2"/>
<dbReference type="BioGRID" id="279761">
    <property type="interactions" value="10"/>
</dbReference>
<dbReference type="FunCoup" id="Q9P3W2">
    <property type="interactions" value="393"/>
</dbReference>
<dbReference type="STRING" id="284812.Q9P3W2"/>
<dbReference type="PaxDb" id="4896-SPAC458.06.1"/>
<dbReference type="EnsemblFungi" id="SPAC458.06.1">
    <property type="protein sequence ID" value="SPAC458.06.1:pep"/>
    <property type="gene ID" value="SPAC458.06"/>
</dbReference>
<dbReference type="GeneID" id="2543338"/>
<dbReference type="KEGG" id="spo:2543338"/>
<dbReference type="PomBase" id="SPAC458.06"/>
<dbReference type="VEuPathDB" id="FungiDB:SPAC458.06"/>
<dbReference type="eggNOG" id="KOG2111">
    <property type="taxonomic scope" value="Eukaryota"/>
</dbReference>
<dbReference type="HOGENOM" id="CLU_025895_2_1_1"/>
<dbReference type="InParanoid" id="Q9P3W2"/>
<dbReference type="OMA" id="CEMLHRT"/>
<dbReference type="PhylomeDB" id="Q9P3W2"/>
<dbReference type="Reactome" id="R-SPO-1632852">
    <property type="pathway name" value="Macroautophagy"/>
</dbReference>
<dbReference type="PRO" id="PR:Q9P3W2"/>
<dbReference type="Proteomes" id="UP000002485">
    <property type="component" value="Chromosome I"/>
</dbReference>
<dbReference type="GO" id="GO:0005737">
    <property type="term" value="C:cytoplasm"/>
    <property type="evidence" value="ECO:0007005"/>
    <property type="project" value="PomBase"/>
</dbReference>
<dbReference type="GO" id="GO:0030659">
    <property type="term" value="C:cytoplasmic vesicle membrane"/>
    <property type="evidence" value="ECO:0007669"/>
    <property type="project" value="UniProtKB-SubCell"/>
</dbReference>
<dbReference type="GO" id="GO:0005829">
    <property type="term" value="C:cytosol"/>
    <property type="evidence" value="ECO:0000318"/>
    <property type="project" value="GO_Central"/>
</dbReference>
<dbReference type="GO" id="GO:0000324">
    <property type="term" value="C:fungal-type vacuole"/>
    <property type="evidence" value="ECO:0000266"/>
    <property type="project" value="PomBase"/>
</dbReference>
<dbReference type="GO" id="GO:0005794">
    <property type="term" value="C:Golgi apparatus"/>
    <property type="evidence" value="ECO:0007005"/>
    <property type="project" value="PomBase"/>
</dbReference>
<dbReference type="GO" id="GO:0000407">
    <property type="term" value="C:phagophore assembly site"/>
    <property type="evidence" value="ECO:0000314"/>
    <property type="project" value="PomBase"/>
</dbReference>
<dbReference type="GO" id="GO:0034045">
    <property type="term" value="C:phagophore assembly site membrane"/>
    <property type="evidence" value="ECO:0000318"/>
    <property type="project" value="GO_Central"/>
</dbReference>
<dbReference type="GO" id="GO:0005774">
    <property type="term" value="C:vacuolar membrane"/>
    <property type="evidence" value="ECO:0007669"/>
    <property type="project" value="UniProtKB-SubCell"/>
</dbReference>
<dbReference type="GO" id="GO:0080025">
    <property type="term" value="F:phosphatidylinositol-3,5-bisphosphate binding"/>
    <property type="evidence" value="ECO:0000318"/>
    <property type="project" value="GO_Central"/>
</dbReference>
<dbReference type="GO" id="GO:0032266">
    <property type="term" value="F:phosphatidylinositol-3-phosphate binding"/>
    <property type="evidence" value="ECO:0000318"/>
    <property type="project" value="GO_Central"/>
</dbReference>
<dbReference type="GO" id="GO:0030674">
    <property type="term" value="F:protein-macromolecule adaptor activity"/>
    <property type="evidence" value="ECO:0000318"/>
    <property type="project" value="GO_Central"/>
</dbReference>
<dbReference type="GO" id="GO:0000422">
    <property type="term" value="P:autophagy of mitochondrion"/>
    <property type="evidence" value="ECO:0000318"/>
    <property type="project" value="GO_Central"/>
</dbReference>
<dbReference type="GO" id="GO:0061723">
    <property type="term" value="P:glycophagy"/>
    <property type="evidence" value="ECO:0000318"/>
    <property type="project" value="GO_Central"/>
</dbReference>
<dbReference type="GO" id="GO:0016236">
    <property type="term" value="P:macroautophagy"/>
    <property type="evidence" value="ECO:0000315"/>
    <property type="project" value="PomBase"/>
</dbReference>
<dbReference type="GO" id="GO:0044804">
    <property type="term" value="P:nucleophagy"/>
    <property type="evidence" value="ECO:0000318"/>
    <property type="project" value="GO_Central"/>
</dbReference>
<dbReference type="GO" id="GO:0000425">
    <property type="term" value="P:pexophagy"/>
    <property type="evidence" value="ECO:0000318"/>
    <property type="project" value="GO_Central"/>
</dbReference>
<dbReference type="GO" id="GO:0034497">
    <property type="term" value="P:protein localization to phagophore assembly site"/>
    <property type="evidence" value="ECO:0000318"/>
    <property type="project" value="GO_Central"/>
</dbReference>
<dbReference type="GO" id="GO:0015031">
    <property type="term" value="P:protein transport"/>
    <property type="evidence" value="ECO:0007669"/>
    <property type="project" value="UniProtKB-KW"/>
</dbReference>
<dbReference type="Gene3D" id="2.130.10.10">
    <property type="entry name" value="YVTN repeat-like/Quinoprotein amine dehydrogenase"/>
    <property type="match status" value="1"/>
</dbReference>
<dbReference type="InterPro" id="IPR048720">
    <property type="entry name" value="PROPPIN"/>
</dbReference>
<dbReference type="InterPro" id="IPR015943">
    <property type="entry name" value="WD40/YVTN_repeat-like_dom_sf"/>
</dbReference>
<dbReference type="InterPro" id="IPR036322">
    <property type="entry name" value="WD40_repeat_dom_sf"/>
</dbReference>
<dbReference type="InterPro" id="IPR001680">
    <property type="entry name" value="WD40_rpt"/>
</dbReference>
<dbReference type="PANTHER" id="PTHR11227">
    <property type="entry name" value="WD-REPEAT PROTEIN INTERACTING WITH PHOSPHOINOSIDES WIPI -RELATED"/>
    <property type="match status" value="1"/>
</dbReference>
<dbReference type="Pfam" id="PF21032">
    <property type="entry name" value="PROPPIN"/>
    <property type="match status" value="1"/>
</dbReference>
<dbReference type="SMART" id="SM00320">
    <property type="entry name" value="WD40"/>
    <property type="match status" value="2"/>
</dbReference>
<dbReference type="SUPFAM" id="SSF50978">
    <property type="entry name" value="WD40 repeat-like"/>
    <property type="match status" value="1"/>
</dbReference>
<dbReference type="PROSITE" id="PS50294">
    <property type="entry name" value="WD_REPEATS_REGION"/>
    <property type="match status" value="1"/>
</dbReference>
<feature type="chain" id="PRO_0000051032" description="SVP1-like protein 2">
    <location>
        <begin position="1"/>
        <end position="364"/>
    </location>
</feature>
<feature type="repeat" description="WD 1">
    <location>
        <begin position="173"/>
        <end position="213"/>
    </location>
</feature>
<feature type="repeat" description="WD 2">
    <location>
        <begin position="218"/>
        <end position="257"/>
    </location>
</feature>
<name>HSV2_SCHPO</name>
<accession>Q9P3W2</accession>